<name>TDH_ALTMD</name>
<gene>
    <name evidence="1" type="primary">tdh</name>
    <name type="ordered locus">MADE_1000320</name>
</gene>
<evidence type="ECO:0000255" key="1">
    <source>
        <dbReference type="HAMAP-Rule" id="MF_00627"/>
    </source>
</evidence>
<proteinExistence type="inferred from homology"/>
<comment type="function">
    <text evidence="1">Catalyzes the NAD(+)-dependent oxidation of L-threonine to 2-amino-3-ketobutyrate.</text>
</comment>
<comment type="catalytic activity">
    <reaction evidence="1">
        <text>L-threonine + NAD(+) = (2S)-2-amino-3-oxobutanoate + NADH + H(+)</text>
        <dbReference type="Rhea" id="RHEA:13161"/>
        <dbReference type="ChEBI" id="CHEBI:15378"/>
        <dbReference type="ChEBI" id="CHEBI:57540"/>
        <dbReference type="ChEBI" id="CHEBI:57926"/>
        <dbReference type="ChEBI" id="CHEBI:57945"/>
        <dbReference type="ChEBI" id="CHEBI:78948"/>
        <dbReference type="EC" id="1.1.1.103"/>
    </reaction>
</comment>
<comment type="cofactor">
    <cofactor evidence="1">
        <name>Zn(2+)</name>
        <dbReference type="ChEBI" id="CHEBI:29105"/>
    </cofactor>
    <text evidence="1">Binds 2 Zn(2+) ions per subunit.</text>
</comment>
<comment type="pathway">
    <text evidence="1">Amino-acid degradation; L-threonine degradation via oxydo-reductase pathway; glycine from L-threonine: step 1/2.</text>
</comment>
<comment type="subunit">
    <text evidence="1">Homotetramer.</text>
</comment>
<comment type="subcellular location">
    <subcellularLocation>
        <location evidence="1">Cytoplasm</location>
    </subcellularLocation>
</comment>
<comment type="similarity">
    <text evidence="1">Belongs to the zinc-containing alcohol dehydrogenase family.</text>
</comment>
<reference key="1">
    <citation type="journal article" date="2008" name="ISME J.">
        <title>Comparative genomics of two ecotypes of the marine planktonic copiotroph Alteromonas macleodii suggests alternative lifestyles associated with different kinds of particulate organic matter.</title>
        <authorList>
            <person name="Ivars-Martinez E."/>
            <person name="Martin-Cuadrado A.-B."/>
            <person name="D'Auria G."/>
            <person name="Mira A."/>
            <person name="Ferriera S."/>
            <person name="Johnson J."/>
            <person name="Friedman R."/>
            <person name="Rodriguez-Valera F."/>
        </authorList>
    </citation>
    <scope>NUCLEOTIDE SEQUENCE [LARGE SCALE GENOMIC DNA]</scope>
    <source>
        <strain>DSM 17117 / CIP 110805 / LMG 28347 / Deep ecotype</strain>
    </source>
</reference>
<feature type="chain" id="PRO_1000130535" description="L-threonine 3-dehydrogenase">
    <location>
        <begin position="1"/>
        <end position="341"/>
    </location>
</feature>
<feature type="active site" description="Charge relay system" evidence="1">
    <location>
        <position position="40"/>
    </location>
</feature>
<feature type="active site" description="Charge relay system" evidence="1">
    <location>
        <position position="43"/>
    </location>
</feature>
<feature type="binding site" evidence="1">
    <location>
        <position position="38"/>
    </location>
    <ligand>
        <name>Zn(2+)</name>
        <dbReference type="ChEBI" id="CHEBI:29105"/>
        <label>1</label>
        <note>catalytic</note>
    </ligand>
</feature>
<feature type="binding site" evidence="1">
    <location>
        <position position="63"/>
    </location>
    <ligand>
        <name>Zn(2+)</name>
        <dbReference type="ChEBI" id="CHEBI:29105"/>
        <label>1</label>
        <note>catalytic</note>
    </ligand>
</feature>
<feature type="binding site" evidence="1">
    <location>
        <position position="64"/>
    </location>
    <ligand>
        <name>Zn(2+)</name>
        <dbReference type="ChEBI" id="CHEBI:29105"/>
        <label>1</label>
        <note>catalytic</note>
    </ligand>
</feature>
<feature type="binding site" evidence="1">
    <location>
        <position position="93"/>
    </location>
    <ligand>
        <name>Zn(2+)</name>
        <dbReference type="ChEBI" id="CHEBI:29105"/>
        <label>2</label>
    </ligand>
</feature>
<feature type="binding site" evidence="1">
    <location>
        <position position="96"/>
    </location>
    <ligand>
        <name>Zn(2+)</name>
        <dbReference type="ChEBI" id="CHEBI:29105"/>
        <label>2</label>
    </ligand>
</feature>
<feature type="binding site" evidence="1">
    <location>
        <position position="99"/>
    </location>
    <ligand>
        <name>Zn(2+)</name>
        <dbReference type="ChEBI" id="CHEBI:29105"/>
        <label>2</label>
    </ligand>
</feature>
<feature type="binding site" evidence="1">
    <location>
        <position position="107"/>
    </location>
    <ligand>
        <name>Zn(2+)</name>
        <dbReference type="ChEBI" id="CHEBI:29105"/>
        <label>2</label>
    </ligand>
</feature>
<feature type="binding site" evidence="1">
    <location>
        <position position="175"/>
    </location>
    <ligand>
        <name>NAD(+)</name>
        <dbReference type="ChEBI" id="CHEBI:57540"/>
    </ligand>
</feature>
<feature type="binding site" evidence="1">
    <location>
        <position position="195"/>
    </location>
    <ligand>
        <name>NAD(+)</name>
        <dbReference type="ChEBI" id="CHEBI:57540"/>
    </ligand>
</feature>
<feature type="binding site" evidence="1">
    <location>
        <position position="200"/>
    </location>
    <ligand>
        <name>NAD(+)</name>
        <dbReference type="ChEBI" id="CHEBI:57540"/>
    </ligand>
</feature>
<feature type="binding site" evidence="1">
    <location>
        <begin position="262"/>
        <end position="264"/>
    </location>
    <ligand>
        <name>NAD(+)</name>
        <dbReference type="ChEBI" id="CHEBI:57540"/>
    </ligand>
</feature>
<feature type="binding site" evidence="1">
    <location>
        <begin position="286"/>
        <end position="287"/>
    </location>
    <ligand>
        <name>NAD(+)</name>
        <dbReference type="ChEBI" id="CHEBI:57540"/>
    </ligand>
</feature>
<feature type="site" description="Important for catalytic activity for the proton relay mechanism but does not participate directly in the coordination of zinc atom" evidence="1">
    <location>
        <position position="148"/>
    </location>
</feature>
<keyword id="KW-0963">Cytoplasm</keyword>
<keyword id="KW-0479">Metal-binding</keyword>
<keyword id="KW-0520">NAD</keyword>
<keyword id="KW-0560">Oxidoreductase</keyword>
<keyword id="KW-0862">Zinc</keyword>
<protein>
    <recommendedName>
        <fullName evidence="1">L-threonine 3-dehydrogenase</fullName>
        <shortName evidence="1">TDH</shortName>
        <ecNumber evidence="1">1.1.1.103</ecNumber>
    </recommendedName>
</protein>
<sequence>MKSLVKAKAEKGIWLQDTPKPEVGHNDLLIKIRKTAICGTDMHIYNWDEWSQNTIPVPVVVGHEYVGEVVGMGQEVKGFEVGDRVSGEGHITCGHCRNCRAGRVHLCRNTEGVGVNRPGAFAEYLVIPAFNAFKIPDNISDDLASIFDPFGNAVHTALSFDLVGEDVLITGAGPIGIMAAAVAKHVGARHVVVTDINPYRLELAKKMGATRTVDVSKENLQDVMDELGMSEGFDVGLEMSGVPVAFRDMLNKMNHGGKIAMLGIPPQDVAVDWNQVIFKGLVIKGIYGREMFETWYKMASLLQSGLDLSPIITHTFSIDDFQKGFDTMGSGHSGKVILDWQ</sequence>
<accession>B4S298</accession>
<accession>F2G1W6</accession>
<organism>
    <name type="scientific">Alteromonas mediterranea (strain DSM 17117 / CIP 110805 / LMG 28347 / Deep ecotype)</name>
    <dbReference type="NCBI Taxonomy" id="1774373"/>
    <lineage>
        <taxon>Bacteria</taxon>
        <taxon>Pseudomonadati</taxon>
        <taxon>Pseudomonadota</taxon>
        <taxon>Gammaproteobacteria</taxon>
        <taxon>Alteromonadales</taxon>
        <taxon>Alteromonadaceae</taxon>
        <taxon>Alteromonas/Salinimonas group</taxon>
        <taxon>Alteromonas</taxon>
    </lineage>
</organism>
<dbReference type="EC" id="1.1.1.103" evidence="1"/>
<dbReference type="EMBL" id="CP001103">
    <property type="protein sequence ID" value="AEA96213.1"/>
    <property type="molecule type" value="Genomic_DNA"/>
</dbReference>
<dbReference type="RefSeq" id="WP_012516587.1">
    <property type="nucleotide sequence ID" value="NC_011138.3"/>
</dbReference>
<dbReference type="SMR" id="B4S298"/>
<dbReference type="KEGG" id="amc:MADE_1000320"/>
<dbReference type="PATRIC" id="fig|314275.5.peg.71"/>
<dbReference type="HOGENOM" id="CLU_026673_11_0_6"/>
<dbReference type="UniPathway" id="UPA00046">
    <property type="reaction ID" value="UER00505"/>
</dbReference>
<dbReference type="Proteomes" id="UP000001870">
    <property type="component" value="Chromosome"/>
</dbReference>
<dbReference type="GO" id="GO:0005737">
    <property type="term" value="C:cytoplasm"/>
    <property type="evidence" value="ECO:0007669"/>
    <property type="project" value="UniProtKB-SubCell"/>
</dbReference>
<dbReference type="GO" id="GO:0008743">
    <property type="term" value="F:L-threonine 3-dehydrogenase activity"/>
    <property type="evidence" value="ECO:0007669"/>
    <property type="project" value="UniProtKB-UniRule"/>
</dbReference>
<dbReference type="GO" id="GO:0008270">
    <property type="term" value="F:zinc ion binding"/>
    <property type="evidence" value="ECO:0007669"/>
    <property type="project" value="UniProtKB-UniRule"/>
</dbReference>
<dbReference type="GO" id="GO:0019518">
    <property type="term" value="P:L-threonine catabolic process to glycine"/>
    <property type="evidence" value="ECO:0007669"/>
    <property type="project" value="UniProtKB-UniPathway"/>
</dbReference>
<dbReference type="Gene3D" id="3.90.180.10">
    <property type="entry name" value="Medium-chain alcohol dehydrogenases, catalytic domain"/>
    <property type="match status" value="1"/>
</dbReference>
<dbReference type="Gene3D" id="3.40.50.720">
    <property type="entry name" value="NAD(P)-binding Rossmann-like Domain"/>
    <property type="match status" value="1"/>
</dbReference>
<dbReference type="HAMAP" id="MF_00627">
    <property type="entry name" value="Thr_dehydrog"/>
    <property type="match status" value="1"/>
</dbReference>
<dbReference type="InterPro" id="IPR013149">
    <property type="entry name" value="ADH-like_C"/>
</dbReference>
<dbReference type="InterPro" id="IPR013154">
    <property type="entry name" value="ADH-like_N"/>
</dbReference>
<dbReference type="InterPro" id="IPR002328">
    <property type="entry name" value="ADH_Zn_CS"/>
</dbReference>
<dbReference type="InterPro" id="IPR011032">
    <property type="entry name" value="GroES-like_sf"/>
</dbReference>
<dbReference type="InterPro" id="IPR004627">
    <property type="entry name" value="L-Threonine_3-DHase"/>
</dbReference>
<dbReference type="InterPro" id="IPR036291">
    <property type="entry name" value="NAD(P)-bd_dom_sf"/>
</dbReference>
<dbReference type="InterPro" id="IPR020843">
    <property type="entry name" value="PKS_ER"/>
</dbReference>
<dbReference type="InterPro" id="IPR050129">
    <property type="entry name" value="Zn_alcohol_dh"/>
</dbReference>
<dbReference type="NCBIfam" id="NF003808">
    <property type="entry name" value="PRK05396.1"/>
    <property type="match status" value="1"/>
</dbReference>
<dbReference type="NCBIfam" id="TIGR00692">
    <property type="entry name" value="tdh"/>
    <property type="match status" value="1"/>
</dbReference>
<dbReference type="PANTHER" id="PTHR43401">
    <property type="entry name" value="L-THREONINE 3-DEHYDROGENASE"/>
    <property type="match status" value="1"/>
</dbReference>
<dbReference type="PANTHER" id="PTHR43401:SF2">
    <property type="entry name" value="L-THREONINE 3-DEHYDROGENASE"/>
    <property type="match status" value="1"/>
</dbReference>
<dbReference type="Pfam" id="PF08240">
    <property type="entry name" value="ADH_N"/>
    <property type="match status" value="1"/>
</dbReference>
<dbReference type="Pfam" id="PF00107">
    <property type="entry name" value="ADH_zinc_N"/>
    <property type="match status" value="1"/>
</dbReference>
<dbReference type="SMART" id="SM00829">
    <property type="entry name" value="PKS_ER"/>
    <property type="match status" value="1"/>
</dbReference>
<dbReference type="SUPFAM" id="SSF50129">
    <property type="entry name" value="GroES-like"/>
    <property type="match status" value="1"/>
</dbReference>
<dbReference type="SUPFAM" id="SSF51735">
    <property type="entry name" value="NAD(P)-binding Rossmann-fold domains"/>
    <property type="match status" value="1"/>
</dbReference>
<dbReference type="PROSITE" id="PS00059">
    <property type="entry name" value="ADH_ZINC"/>
    <property type="match status" value="1"/>
</dbReference>